<accession>O97484</accession>
<protein>
    <recommendedName>
        <fullName>Histone H2B</fullName>
    </recommendedName>
</protein>
<reference key="1">
    <citation type="journal article" date="1997" name="Gene">
        <title>Sequence and transcript analysis of macronuclear histone H2B genes from Euplotes crassus.</title>
        <authorList>
            <person name="Tebeau C.M."/>
            <person name="Jahn C.L."/>
        </authorList>
    </citation>
    <scope>NUCLEOTIDE SEQUENCE [GENOMIC DNA]</scope>
</reference>
<gene>
    <name type="primary">H2B1</name>
</gene>
<gene>
    <name type="primary">H2B2</name>
</gene>
<evidence type="ECO:0000250" key="1"/>
<evidence type="ECO:0000256" key="2">
    <source>
        <dbReference type="SAM" id="MobiDB-lite"/>
    </source>
</evidence>
<evidence type="ECO:0000305" key="3"/>
<organism>
    <name type="scientific">Euplotes crassus</name>
    <dbReference type="NCBI Taxonomy" id="5936"/>
    <lineage>
        <taxon>Eukaryota</taxon>
        <taxon>Sar</taxon>
        <taxon>Alveolata</taxon>
        <taxon>Ciliophora</taxon>
        <taxon>Intramacronucleata</taxon>
        <taxon>Spirotrichea</taxon>
        <taxon>Hypotrichia</taxon>
        <taxon>Euplotida</taxon>
        <taxon>Euplotidae</taxon>
        <taxon>Moneuplotes</taxon>
    </lineage>
</organism>
<feature type="chain" id="PRO_0000071902" description="Histone H2B">
    <location>
        <begin position="1"/>
        <end position="113"/>
    </location>
</feature>
<feature type="region of interest" description="Disordered" evidence="2">
    <location>
        <begin position="1"/>
        <end position="21"/>
    </location>
</feature>
<feature type="compositionally biased region" description="Basic residues" evidence="2">
    <location>
        <begin position="7"/>
        <end position="21"/>
    </location>
</feature>
<feature type="cross-link" description="Glycyl lysine isopeptide (Lys-Gly) (interchain with G-Cter in ubiquitin)" evidence="1">
    <location>
        <position position="109"/>
    </location>
</feature>
<comment type="function">
    <text>Core component of nucleosome. Nucleosomes wrap and compact DNA into chromatin, limiting DNA accessibility to the cellular machineries which require DNA as a template. Histones thereby play a central role in transcription regulation, DNA repair, DNA replication and chromosomal stability. DNA accessibility is regulated via a complex set of post-translational modifications of histones, also called histone code, and nucleosome remodeling.</text>
</comment>
<comment type="subunit">
    <text>The nucleosome is a histone octamer containing two molecules each of H2A, H2B, H3 and H4 assembled in one H3-H4 heterotetramer and two H2A-H2B heterodimers. The octamer wraps approximately 147 bp of DNA.</text>
</comment>
<comment type="subcellular location">
    <subcellularLocation>
        <location evidence="1">Nucleus</location>
    </subcellularLocation>
    <subcellularLocation>
        <location evidence="1">Chromosome</location>
    </subcellularLocation>
</comment>
<comment type="PTM">
    <text evidence="1">Monoubiquitination of Lys-109 gives a specific tag for epigenetic transcriptional activation and is also prerequisite for histone H3 'Lys-4' and 'Lys-79' methylation.</text>
</comment>
<comment type="similarity">
    <text evidence="3">Belongs to the histone H2B family.</text>
</comment>
<name>H2B_EUPCR</name>
<keyword id="KW-0158">Chromosome</keyword>
<keyword id="KW-0238">DNA-binding</keyword>
<keyword id="KW-1017">Isopeptide bond</keyword>
<keyword id="KW-0544">Nucleosome core</keyword>
<keyword id="KW-0539">Nucleus</keyword>
<keyword id="KW-0832">Ubl conjugation</keyword>
<proteinExistence type="inferred from homology"/>
<dbReference type="EMBL" id="U93852">
    <property type="protein sequence ID" value="AAC47753.1"/>
    <property type="molecule type" value="Genomic_DNA"/>
</dbReference>
<dbReference type="EMBL" id="U93853">
    <property type="protein sequence ID" value="AAC47754.1"/>
    <property type="molecule type" value="Genomic_DNA"/>
</dbReference>
<dbReference type="SMR" id="O97484"/>
<dbReference type="OrthoDB" id="305527at2759"/>
<dbReference type="GO" id="GO:0000786">
    <property type="term" value="C:nucleosome"/>
    <property type="evidence" value="ECO:0007669"/>
    <property type="project" value="UniProtKB-KW"/>
</dbReference>
<dbReference type="GO" id="GO:0005634">
    <property type="term" value="C:nucleus"/>
    <property type="evidence" value="ECO:0007669"/>
    <property type="project" value="UniProtKB-SubCell"/>
</dbReference>
<dbReference type="GO" id="GO:0003677">
    <property type="term" value="F:DNA binding"/>
    <property type="evidence" value="ECO:0007669"/>
    <property type="project" value="UniProtKB-KW"/>
</dbReference>
<dbReference type="GO" id="GO:0046982">
    <property type="term" value="F:protein heterodimerization activity"/>
    <property type="evidence" value="ECO:0007669"/>
    <property type="project" value="InterPro"/>
</dbReference>
<dbReference type="GO" id="GO:0030527">
    <property type="term" value="F:structural constituent of chromatin"/>
    <property type="evidence" value="ECO:0007669"/>
    <property type="project" value="InterPro"/>
</dbReference>
<dbReference type="CDD" id="cd22910">
    <property type="entry name" value="HFD_H2B"/>
    <property type="match status" value="1"/>
</dbReference>
<dbReference type="FunFam" id="1.10.20.10:FF:000016">
    <property type="entry name" value="Histone H2B"/>
    <property type="match status" value="1"/>
</dbReference>
<dbReference type="Gene3D" id="1.10.20.10">
    <property type="entry name" value="Histone, subunit A"/>
    <property type="match status" value="1"/>
</dbReference>
<dbReference type="InterPro" id="IPR009072">
    <property type="entry name" value="Histone-fold"/>
</dbReference>
<dbReference type="InterPro" id="IPR007125">
    <property type="entry name" value="Histone_H2A/H2B/H3"/>
</dbReference>
<dbReference type="InterPro" id="IPR000558">
    <property type="entry name" value="Histone_H2B"/>
</dbReference>
<dbReference type="InterPro" id="IPR055333">
    <property type="entry name" value="HISTONE_H2B_site"/>
</dbReference>
<dbReference type="PANTHER" id="PTHR23428">
    <property type="entry name" value="HISTONE H2B"/>
    <property type="match status" value="1"/>
</dbReference>
<dbReference type="Pfam" id="PF00125">
    <property type="entry name" value="Histone"/>
    <property type="match status" value="1"/>
</dbReference>
<dbReference type="PRINTS" id="PR00621">
    <property type="entry name" value="HISTONEH2B"/>
</dbReference>
<dbReference type="SMART" id="SM00427">
    <property type="entry name" value="H2B"/>
    <property type="match status" value="1"/>
</dbReference>
<dbReference type="SUPFAM" id="SSF47113">
    <property type="entry name" value="Histone-fold"/>
    <property type="match status" value="1"/>
</dbReference>
<dbReference type="PROSITE" id="PS00357">
    <property type="entry name" value="HISTONE_H2B"/>
    <property type="match status" value="1"/>
</dbReference>
<sequence>MPATPAKRAKRVQQEKRHHKKRTETFSVYIYRVLKQVHPETGVSKKSMSIMNSFINDIFEKIALEASKLVRYNKKHTLSSREVQTAVRLLLPGELAKHAVSEGTKAVTKYTSS</sequence>